<evidence type="ECO:0000255" key="1"/>
<evidence type="ECO:0000303" key="2">
    <source>
    </source>
</evidence>
<evidence type="ECO:0000305" key="3"/>
<evidence type="ECO:0000305" key="4">
    <source>
    </source>
</evidence>
<proteinExistence type="inferred from homology"/>
<reference key="1">
    <citation type="journal article" date="2014" name="Mol. Biol. Evol.">
        <title>Clawing through evolution: toxin diversification and convergence in the ancient lineage Chilopoda (centipedes).</title>
        <authorList>
            <person name="Undheim E.A."/>
            <person name="Jones A."/>
            <person name="Clauser K.R."/>
            <person name="Holland J.W."/>
            <person name="Pineda S.S."/>
            <person name="King G.F."/>
            <person name="Fry B.G."/>
        </authorList>
    </citation>
    <scope>NUCLEOTIDE SEQUENCE [MRNA]</scope>
    <scope>NOMENCLATURE</scope>
    <source>
        <tissue>Venom gland</tissue>
    </source>
</reference>
<feature type="signal peptide" evidence="1">
    <location>
        <begin position="1"/>
        <end position="22"/>
    </location>
</feature>
<feature type="chain" id="PRO_0000446783" description="U-scoloptoxin(13)-Sa1a" evidence="3">
    <location>
        <begin position="23"/>
        <end position="76"/>
    </location>
</feature>
<organism>
    <name type="scientific">Scolopendra alternans</name>
    <name type="common">Florida Keys giant centipede</name>
    <dbReference type="NCBI Taxonomy" id="1329349"/>
    <lineage>
        <taxon>Eukaryota</taxon>
        <taxon>Metazoa</taxon>
        <taxon>Ecdysozoa</taxon>
        <taxon>Arthropoda</taxon>
        <taxon>Myriapoda</taxon>
        <taxon>Chilopoda</taxon>
        <taxon>Pleurostigmophora</taxon>
        <taxon>Scolopendromorpha</taxon>
        <taxon>Scolopendridae</taxon>
        <taxon>Scolopendra</taxon>
    </lineage>
</organism>
<protein>
    <recommendedName>
        <fullName evidence="2">U-scoloptoxin(13)-Sa1a</fullName>
        <shortName evidence="2">U-SLPTX(13)-Sa1a</shortName>
    </recommendedName>
</protein>
<keyword id="KW-1015">Disulfide bond</keyword>
<keyword id="KW-0964">Secreted</keyword>
<keyword id="KW-0732">Signal</keyword>
<keyword id="KW-0800">Toxin</keyword>
<dbReference type="SMR" id="P0DQB1"/>
<dbReference type="GO" id="GO:0005576">
    <property type="term" value="C:extracellular region"/>
    <property type="evidence" value="ECO:0007669"/>
    <property type="project" value="UniProtKB-SubCell"/>
</dbReference>
<dbReference type="GO" id="GO:0090729">
    <property type="term" value="F:toxin activity"/>
    <property type="evidence" value="ECO:0007669"/>
    <property type="project" value="UniProtKB-KW"/>
</dbReference>
<name>TXD1A_SCOAL</name>
<accession>P0DQB1</accession>
<sequence length="76" mass="8751">MAYIFALIFAFVVCINTDVIQAEEIQHDTLRNMEYRLSCTPKNSECERMTDICCPGFQCLGCNPYDKNDVNKCKCQ</sequence>
<comment type="subcellular location">
    <subcellularLocation>
        <location evidence="4">Secreted</location>
    </subcellularLocation>
</comment>
<comment type="tissue specificity">
    <text evidence="4">Expressed by the venom gland.</text>
</comment>
<comment type="PTM">
    <text evidence="3">Contains 4 disulfide bonds.</text>
</comment>
<comment type="similarity">
    <text evidence="3">Belongs to the scoloptoxin-13 family.</text>
</comment>
<comment type="online information" name="National Center for Biotechnology Information (NCBI)">
    <link uri="https://www.ncbi.nlm.nih.gov/nuccore/GASK01000040"/>
</comment>